<gene>
    <name type="primary">ygzA</name>
    <name type="ordered locus">BSU08770</name>
</gene>
<name>YGZA_BACSU</name>
<sequence>MEVNKESLVADELHRMFLAGELQITVEEDINNISERLRNGDLSLDRLSGEDVFIKETVNEALRRVEQ</sequence>
<organism>
    <name type="scientific">Bacillus subtilis (strain 168)</name>
    <dbReference type="NCBI Taxonomy" id="224308"/>
    <lineage>
        <taxon>Bacteria</taxon>
        <taxon>Bacillati</taxon>
        <taxon>Bacillota</taxon>
        <taxon>Bacilli</taxon>
        <taxon>Bacillales</taxon>
        <taxon>Bacillaceae</taxon>
        <taxon>Bacillus</taxon>
    </lineage>
</organism>
<keyword id="KW-1185">Reference proteome</keyword>
<proteinExistence type="predicted"/>
<protein>
    <recommendedName>
        <fullName>Uncharacterized protein YgzA</fullName>
    </recommendedName>
</protein>
<dbReference type="EMBL" id="AL009126">
    <property type="protein sequence ID" value="CAB12705.2"/>
    <property type="molecule type" value="Genomic_DNA"/>
</dbReference>
<dbReference type="PIR" id="G69817">
    <property type="entry name" value="G69817"/>
</dbReference>
<dbReference type="RefSeq" id="NP_388757.2">
    <property type="nucleotide sequence ID" value="NC_000964.3"/>
</dbReference>
<dbReference type="RefSeq" id="WP_003233478.1">
    <property type="nucleotide sequence ID" value="NZ_OZ025638.1"/>
</dbReference>
<dbReference type="SMR" id="O31586"/>
<dbReference type="FunCoup" id="O31586">
    <property type="interactions" value="219"/>
</dbReference>
<dbReference type="STRING" id="224308.BSU08770"/>
<dbReference type="PaxDb" id="224308-BSU08770"/>
<dbReference type="EnsemblBacteria" id="CAB12705">
    <property type="protein sequence ID" value="CAB12705"/>
    <property type="gene ID" value="BSU_08770"/>
</dbReference>
<dbReference type="GeneID" id="936205"/>
<dbReference type="KEGG" id="bsu:BSU08770"/>
<dbReference type="PATRIC" id="fig|224308.179.peg.946"/>
<dbReference type="eggNOG" id="ENOG5030DM3">
    <property type="taxonomic scope" value="Bacteria"/>
</dbReference>
<dbReference type="InParanoid" id="O31586"/>
<dbReference type="OrthoDB" id="2908708at2"/>
<dbReference type="BioCyc" id="BSUB:BSU08770-MONOMER"/>
<dbReference type="Proteomes" id="UP000001570">
    <property type="component" value="Chromosome"/>
</dbReference>
<accession>O31586</accession>
<feature type="chain" id="PRO_0000049547" description="Uncharacterized protein YgzA">
    <location>
        <begin position="1"/>
        <end position="67"/>
    </location>
</feature>
<reference key="1">
    <citation type="journal article" date="1997" name="Nature">
        <title>The complete genome sequence of the Gram-positive bacterium Bacillus subtilis.</title>
        <authorList>
            <person name="Kunst F."/>
            <person name="Ogasawara N."/>
            <person name="Moszer I."/>
            <person name="Albertini A.M."/>
            <person name="Alloni G."/>
            <person name="Azevedo V."/>
            <person name="Bertero M.G."/>
            <person name="Bessieres P."/>
            <person name="Bolotin A."/>
            <person name="Borchert S."/>
            <person name="Borriss R."/>
            <person name="Boursier L."/>
            <person name="Brans A."/>
            <person name="Braun M."/>
            <person name="Brignell S.C."/>
            <person name="Bron S."/>
            <person name="Brouillet S."/>
            <person name="Bruschi C.V."/>
            <person name="Caldwell B."/>
            <person name="Capuano V."/>
            <person name="Carter N.M."/>
            <person name="Choi S.-K."/>
            <person name="Codani J.-J."/>
            <person name="Connerton I.F."/>
            <person name="Cummings N.J."/>
            <person name="Daniel R.A."/>
            <person name="Denizot F."/>
            <person name="Devine K.M."/>
            <person name="Duesterhoeft A."/>
            <person name="Ehrlich S.D."/>
            <person name="Emmerson P.T."/>
            <person name="Entian K.-D."/>
            <person name="Errington J."/>
            <person name="Fabret C."/>
            <person name="Ferrari E."/>
            <person name="Foulger D."/>
            <person name="Fritz C."/>
            <person name="Fujita M."/>
            <person name="Fujita Y."/>
            <person name="Fuma S."/>
            <person name="Galizzi A."/>
            <person name="Galleron N."/>
            <person name="Ghim S.-Y."/>
            <person name="Glaser P."/>
            <person name="Goffeau A."/>
            <person name="Golightly E.J."/>
            <person name="Grandi G."/>
            <person name="Guiseppi G."/>
            <person name="Guy B.J."/>
            <person name="Haga K."/>
            <person name="Haiech J."/>
            <person name="Harwood C.R."/>
            <person name="Henaut A."/>
            <person name="Hilbert H."/>
            <person name="Holsappel S."/>
            <person name="Hosono S."/>
            <person name="Hullo M.-F."/>
            <person name="Itaya M."/>
            <person name="Jones L.-M."/>
            <person name="Joris B."/>
            <person name="Karamata D."/>
            <person name="Kasahara Y."/>
            <person name="Klaerr-Blanchard M."/>
            <person name="Klein C."/>
            <person name="Kobayashi Y."/>
            <person name="Koetter P."/>
            <person name="Koningstein G."/>
            <person name="Krogh S."/>
            <person name="Kumano M."/>
            <person name="Kurita K."/>
            <person name="Lapidus A."/>
            <person name="Lardinois S."/>
            <person name="Lauber J."/>
            <person name="Lazarevic V."/>
            <person name="Lee S.-M."/>
            <person name="Levine A."/>
            <person name="Liu H."/>
            <person name="Masuda S."/>
            <person name="Mauel C."/>
            <person name="Medigue C."/>
            <person name="Medina N."/>
            <person name="Mellado R.P."/>
            <person name="Mizuno M."/>
            <person name="Moestl D."/>
            <person name="Nakai S."/>
            <person name="Noback M."/>
            <person name="Noone D."/>
            <person name="O'Reilly M."/>
            <person name="Ogawa K."/>
            <person name="Ogiwara A."/>
            <person name="Oudega B."/>
            <person name="Park S.-H."/>
            <person name="Parro V."/>
            <person name="Pohl T.M."/>
            <person name="Portetelle D."/>
            <person name="Porwollik S."/>
            <person name="Prescott A.M."/>
            <person name="Presecan E."/>
            <person name="Pujic P."/>
            <person name="Purnelle B."/>
            <person name="Rapoport G."/>
            <person name="Rey M."/>
            <person name="Reynolds S."/>
            <person name="Rieger M."/>
            <person name="Rivolta C."/>
            <person name="Rocha E."/>
            <person name="Roche B."/>
            <person name="Rose M."/>
            <person name="Sadaie Y."/>
            <person name="Sato T."/>
            <person name="Scanlan E."/>
            <person name="Schleich S."/>
            <person name="Schroeter R."/>
            <person name="Scoffone F."/>
            <person name="Sekiguchi J."/>
            <person name="Sekowska A."/>
            <person name="Seror S.J."/>
            <person name="Serror P."/>
            <person name="Shin B.-S."/>
            <person name="Soldo B."/>
            <person name="Sorokin A."/>
            <person name="Tacconi E."/>
            <person name="Takagi T."/>
            <person name="Takahashi H."/>
            <person name="Takemaru K."/>
            <person name="Takeuchi M."/>
            <person name="Tamakoshi A."/>
            <person name="Tanaka T."/>
            <person name="Terpstra P."/>
            <person name="Tognoni A."/>
            <person name="Tosato V."/>
            <person name="Uchiyama S."/>
            <person name="Vandenbol M."/>
            <person name="Vannier F."/>
            <person name="Vassarotti A."/>
            <person name="Viari A."/>
            <person name="Wambutt R."/>
            <person name="Wedler E."/>
            <person name="Wedler H."/>
            <person name="Weitzenegger T."/>
            <person name="Winters P."/>
            <person name="Wipat A."/>
            <person name="Yamamoto H."/>
            <person name="Yamane K."/>
            <person name="Yasumoto K."/>
            <person name="Yata K."/>
            <person name="Yoshida K."/>
            <person name="Yoshikawa H.-F."/>
            <person name="Zumstein E."/>
            <person name="Yoshikawa H."/>
            <person name="Danchin A."/>
        </authorList>
    </citation>
    <scope>NUCLEOTIDE SEQUENCE [LARGE SCALE GENOMIC DNA]</scope>
    <source>
        <strain>168</strain>
    </source>
</reference>
<reference key="2">
    <citation type="journal article" date="2009" name="Microbiology">
        <title>From a consortium sequence to a unified sequence: the Bacillus subtilis 168 reference genome a decade later.</title>
        <authorList>
            <person name="Barbe V."/>
            <person name="Cruveiller S."/>
            <person name="Kunst F."/>
            <person name="Lenoble P."/>
            <person name="Meurice G."/>
            <person name="Sekowska A."/>
            <person name="Vallenet D."/>
            <person name="Wang T."/>
            <person name="Moszer I."/>
            <person name="Medigue C."/>
            <person name="Danchin A."/>
        </authorList>
    </citation>
    <scope>SEQUENCE REVISION TO 42 AND 51</scope>
</reference>